<proteinExistence type="inferred from homology"/>
<accession>Q8ZPN1</accession>
<protein>
    <recommendedName>
        <fullName evidence="1">Anhydro-N-acetylmuramic acid kinase</fullName>
        <ecNumber evidence="1">2.7.1.170</ecNumber>
    </recommendedName>
    <alternativeName>
        <fullName evidence="1">AnhMurNAc kinase</fullName>
    </alternativeName>
</protein>
<feature type="chain" id="PRO_0000250056" description="Anhydro-N-acetylmuramic acid kinase">
    <location>
        <begin position="1"/>
        <end position="373"/>
    </location>
</feature>
<feature type="binding site" evidence="1">
    <location>
        <begin position="12"/>
        <end position="19"/>
    </location>
    <ligand>
        <name>ATP</name>
        <dbReference type="ChEBI" id="CHEBI:30616"/>
    </ligand>
</feature>
<dbReference type="EC" id="2.7.1.170" evidence="1"/>
<dbReference type="EMBL" id="AE006468">
    <property type="protein sequence ID" value="AAL20368.1"/>
    <property type="molecule type" value="Genomic_DNA"/>
</dbReference>
<dbReference type="RefSeq" id="WP_000835011.1">
    <property type="nucleotide sequence ID" value="NC_003197.2"/>
</dbReference>
<dbReference type="SMR" id="Q8ZPN1"/>
<dbReference type="STRING" id="99287.STM1446"/>
<dbReference type="PaxDb" id="99287-STM1446"/>
<dbReference type="KEGG" id="stm:STM1446"/>
<dbReference type="PATRIC" id="fig|99287.12.peg.1529"/>
<dbReference type="HOGENOM" id="CLU_038782_0_0_6"/>
<dbReference type="OMA" id="TGPGNMV"/>
<dbReference type="PhylomeDB" id="Q8ZPN1"/>
<dbReference type="BioCyc" id="SENT99287:STM1446-MONOMER"/>
<dbReference type="UniPathway" id="UPA00343"/>
<dbReference type="UniPathway" id="UPA00544"/>
<dbReference type="Proteomes" id="UP000001014">
    <property type="component" value="Chromosome"/>
</dbReference>
<dbReference type="GO" id="GO:0005524">
    <property type="term" value="F:ATP binding"/>
    <property type="evidence" value="ECO:0007669"/>
    <property type="project" value="UniProtKB-UniRule"/>
</dbReference>
<dbReference type="GO" id="GO:0016301">
    <property type="term" value="F:kinase activity"/>
    <property type="evidence" value="ECO:0000318"/>
    <property type="project" value="GO_Central"/>
</dbReference>
<dbReference type="GO" id="GO:0016773">
    <property type="term" value="F:phosphotransferase activity, alcohol group as acceptor"/>
    <property type="evidence" value="ECO:0007669"/>
    <property type="project" value="UniProtKB-UniRule"/>
</dbReference>
<dbReference type="GO" id="GO:0097175">
    <property type="term" value="P:1,6-anhydro-N-acetyl-beta-muramic acid catabolic process"/>
    <property type="evidence" value="ECO:0007669"/>
    <property type="project" value="UniProtKB-UniRule"/>
</dbReference>
<dbReference type="GO" id="GO:0006040">
    <property type="term" value="P:amino sugar metabolic process"/>
    <property type="evidence" value="ECO:0007669"/>
    <property type="project" value="InterPro"/>
</dbReference>
<dbReference type="GO" id="GO:0009254">
    <property type="term" value="P:peptidoglycan turnover"/>
    <property type="evidence" value="ECO:0007669"/>
    <property type="project" value="UniProtKB-UniRule"/>
</dbReference>
<dbReference type="CDD" id="cd24050">
    <property type="entry name" value="ASKHA_NBD_ANMK"/>
    <property type="match status" value="1"/>
</dbReference>
<dbReference type="Gene3D" id="3.30.420.40">
    <property type="match status" value="2"/>
</dbReference>
<dbReference type="HAMAP" id="MF_01270">
    <property type="entry name" value="AnhMurNAc_kinase"/>
    <property type="match status" value="1"/>
</dbReference>
<dbReference type="InterPro" id="IPR005338">
    <property type="entry name" value="Anhydro_N_Ac-Mur_kinase"/>
</dbReference>
<dbReference type="InterPro" id="IPR043129">
    <property type="entry name" value="ATPase_NBD"/>
</dbReference>
<dbReference type="NCBIfam" id="NF007138">
    <property type="entry name" value="PRK09585.1-1"/>
    <property type="match status" value="1"/>
</dbReference>
<dbReference type="NCBIfam" id="NF007139">
    <property type="entry name" value="PRK09585.1-3"/>
    <property type="match status" value="1"/>
</dbReference>
<dbReference type="NCBIfam" id="NF007148">
    <property type="entry name" value="PRK09585.3-2"/>
    <property type="match status" value="1"/>
</dbReference>
<dbReference type="PANTHER" id="PTHR30605">
    <property type="entry name" value="ANHYDRO-N-ACETYLMURAMIC ACID KINASE"/>
    <property type="match status" value="1"/>
</dbReference>
<dbReference type="PANTHER" id="PTHR30605:SF0">
    <property type="entry name" value="ANHYDRO-N-ACETYLMURAMIC ACID KINASE"/>
    <property type="match status" value="1"/>
</dbReference>
<dbReference type="Pfam" id="PF03702">
    <property type="entry name" value="AnmK"/>
    <property type="match status" value="1"/>
</dbReference>
<dbReference type="SUPFAM" id="SSF53067">
    <property type="entry name" value="Actin-like ATPase domain"/>
    <property type="match status" value="1"/>
</dbReference>
<gene>
    <name evidence="1" type="primary">anmK</name>
    <name type="ordered locus">STM1446</name>
</gene>
<reference key="1">
    <citation type="journal article" date="2001" name="Nature">
        <title>Complete genome sequence of Salmonella enterica serovar Typhimurium LT2.</title>
        <authorList>
            <person name="McClelland M."/>
            <person name="Sanderson K.E."/>
            <person name="Spieth J."/>
            <person name="Clifton S.W."/>
            <person name="Latreille P."/>
            <person name="Courtney L."/>
            <person name="Porwollik S."/>
            <person name="Ali J."/>
            <person name="Dante M."/>
            <person name="Du F."/>
            <person name="Hou S."/>
            <person name="Layman D."/>
            <person name="Leonard S."/>
            <person name="Nguyen C."/>
            <person name="Scott K."/>
            <person name="Holmes A."/>
            <person name="Grewal N."/>
            <person name="Mulvaney E."/>
            <person name="Ryan E."/>
            <person name="Sun H."/>
            <person name="Florea L."/>
            <person name="Miller W."/>
            <person name="Stoneking T."/>
            <person name="Nhan M."/>
            <person name="Waterston R."/>
            <person name="Wilson R.K."/>
        </authorList>
    </citation>
    <scope>NUCLEOTIDE SEQUENCE [LARGE SCALE GENOMIC DNA]</scope>
    <source>
        <strain>LT2 / SGSC1412 / ATCC 700720</strain>
    </source>
</reference>
<organism>
    <name type="scientific">Salmonella typhimurium (strain LT2 / SGSC1412 / ATCC 700720)</name>
    <dbReference type="NCBI Taxonomy" id="99287"/>
    <lineage>
        <taxon>Bacteria</taxon>
        <taxon>Pseudomonadati</taxon>
        <taxon>Pseudomonadota</taxon>
        <taxon>Gammaproteobacteria</taxon>
        <taxon>Enterobacterales</taxon>
        <taxon>Enterobacteriaceae</taxon>
        <taxon>Salmonella</taxon>
    </lineage>
</organism>
<evidence type="ECO:0000255" key="1">
    <source>
        <dbReference type="HAMAP-Rule" id="MF_01270"/>
    </source>
</evidence>
<comment type="function">
    <text evidence="1">Catalyzes the specific phosphorylation of 1,6-anhydro-N-acetylmuramic acid (anhMurNAc) with the simultaneous cleavage of the 1,6-anhydro ring, generating MurNAc-6-P. Is required for the utilization of anhMurNAc either imported from the medium or derived from its own cell wall murein, and thus plays a role in cell wall recycling.</text>
</comment>
<comment type="catalytic activity">
    <reaction evidence="1">
        <text>1,6-anhydro-N-acetyl-beta-muramate + ATP + H2O = N-acetyl-D-muramate 6-phosphate + ADP + H(+)</text>
        <dbReference type="Rhea" id="RHEA:24952"/>
        <dbReference type="ChEBI" id="CHEBI:15377"/>
        <dbReference type="ChEBI" id="CHEBI:15378"/>
        <dbReference type="ChEBI" id="CHEBI:30616"/>
        <dbReference type="ChEBI" id="CHEBI:58690"/>
        <dbReference type="ChEBI" id="CHEBI:58722"/>
        <dbReference type="ChEBI" id="CHEBI:456216"/>
        <dbReference type="EC" id="2.7.1.170"/>
    </reaction>
</comment>
<comment type="pathway">
    <text evidence="1">Amino-sugar metabolism; 1,6-anhydro-N-acetylmuramate degradation.</text>
</comment>
<comment type="pathway">
    <text evidence="1">Cell wall biogenesis; peptidoglycan recycling.</text>
</comment>
<comment type="similarity">
    <text evidence="1">Belongs to the anhydro-N-acetylmuramic acid kinase family.</text>
</comment>
<sequence>MKSGRFIGVMSGTSLDGVDVVLAAIDETMVAQQASLTWPIPVHLKKGILDICQGQPLTLSQLGQLDTQLGRLFAQAVNALLAQQRLQPRDIVAIGCHGQTVWHEPTGEAPHTLQIGDNNHIVAHTGITVVGDFRRRDIALGGQGAPLVPAFHHALLGHPTEKRMVLNIGGIANLSLLFPGQAVRGYDTGPGNMLMDAWIWRQCAQPYDKDAAWAKEGQVILPLLQKMLRDPYFAASAPKSTGREYFNYGWLERHLAAFPGADARDVQATLAELTAVSIAQQVLLNGGCERLMVCGGGGRNPLVMARLAALLPGIEVSTTDKAGISGDDMEALAFAWLAWRTLAGLPGNLPSVTGATEASVLGAIYPANPITQS</sequence>
<keyword id="KW-0067">ATP-binding</keyword>
<keyword id="KW-0119">Carbohydrate metabolism</keyword>
<keyword id="KW-0418">Kinase</keyword>
<keyword id="KW-0547">Nucleotide-binding</keyword>
<keyword id="KW-1185">Reference proteome</keyword>
<keyword id="KW-0808">Transferase</keyword>
<name>ANMK_SALTY</name>